<reference key="1">
    <citation type="submission" date="2003-04" db="EMBL/GenBank/DDBJ databases">
        <title>Cloning and characterization of two novel OATP genes on human 5q21.1.</title>
        <authorList>
            <person name="Fu-Zhang W."/>
        </authorList>
    </citation>
    <scope>NUCLEOTIDE SEQUENCE [MRNA] (ISOFORM 1)</scope>
</reference>
<reference key="2">
    <citation type="journal article" date="2003" name="Mol. Endocrinol.">
        <title>Identification and characterization of novel rat and human gonad-specific organic anion transporters.</title>
        <authorList>
            <person name="Suzuki T."/>
            <person name="Onogawa T."/>
            <person name="Asano N."/>
            <person name="Mizutamari H."/>
            <person name="Mikkaichi T."/>
            <person name="Tanemoto M."/>
            <person name="Abe M."/>
            <person name="Satoh F."/>
            <person name="Unno M."/>
            <person name="Nunoki K."/>
            <person name="Suzuki M."/>
            <person name="Hishinuma T."/>
            <person name="Goto J."/>
            <person name="Shimosegawa T."/>
            <person name="Matsuno S."/>
            <person name="Ito S."/>
            <person name="Abe T."/>
        </authorList>
    </citation>
    <scope>NUCLEOTIDE SEQUENCE [MRNA] (ISOFORM 1)</scope>
    <scope>TISSUE SPECIFICITY</scope>
</reference>
<reference key="3">
    <citation type="journal article" date="2004" name="Nat. Genet.">
        <title>Complete sequencing and characterization of 21,243 full-length human cDNAs.</title>
        <authorList>
            <person name="Ota T."/>
            <person name="Suzuki Y."/>
            <person name="Nishikawa T."/>
            <person name="Otsuki T."/>
            <person name="Sugiyama T."/>
            <person name="Irie R."/>
            <person name="Wakamatsu A."/>
            <person name="Hayashi K."/>
            <person name="Sato H."/>
            <person name="Nagai K."/>
            <person name="Kimura K."/>
            <person name="Makita H."/>
            <person name="Sekine M."/>
            <person name="Obayashi M."/>
            <person name="Nishi T."/>
            <person name="Shibahara T."/>
            <person name="Tanaka T."/>
            <person name="Ishii S."/>
            <person name="Yamamoto J."/>
            <person name="Saito K."/>
            <person name="Kawai Y."/>
            <person name="Isono Y."/>
            <person name="Nakamura Y."/>
            <person name="Nagahari K."/>
            <person name="Murakami K."/>
            <person name="Yasuda T."/>
            <person name="Iwayanagi T."/>
            <person name="Wagatsuma M."/>
            <person name="Shiratori A."/>
            <person name="Sudo H."/>
            <person name="Hosoiri T."/>
            <person name="Kaku Y."/>
            <person name="Kodaira H."/>
            <person name="Kondo H."/>
            <person name="Sugawara M."/>
            <person name="Takahashi M."/>
            <person name="Kanda K."/>
            <person name="Yokoi T."/>
            <person name="Furuya T."/>
            <person name="Kikkawa E."/>
            <person name="Omura Y."/>
            <person name="Abe K."/>
            <person name="Kamihara K."/>
            <person name="Katsuta N."/>
            <person name="Sato K."/>
            <person name="Tanikawa M."/>
            <person name="Yamazaki M."/>
            <person name="Ninomiya K."/>
            <person name="Ishibashi T."/>
            <person name="Yamashita H."/>
            <person name="Murakawa K."/>
            <person name="Fujimori K."/>
            <person name="Tanai H."/>
            <person name="Kimata M."/>
            <person name="Watanabe M."/>
            <person name="Hiraoka S."/>
            <person name="Chiba Y."/>
            <person name="Ishida S."/>
            <person name="Ono Y."/>
            <person name="Takiguchi S."/>
            <person name="Watanabe S."/>
            <person name="Yosida M."/>
            <person name="Hotuta T."/>
            <person name="Kusano J."/>
            <person name="Kanehori K."/>
            <person name="Takahashi-Fujii A."/>
            <person name="Hara H."/>
            <person name="Tanase T.-O."/>
            <person name="Nomura Y."/>
            <person name="Togiya S."/>
            <person name="Komai F."/>
            <person name="Hara R."/>
            <person name="Takeuchi K."/>
            <person name="Arita M."/>
            <person name="Imose N."/>
            <person name="Musashino K."/>
            <person name="Yuuki H."/>
            <person name="Oshima A."/>
            <person name="Sasaki N."/>
            <person name="Aotsuka S."/>
            <person name="Yoshikawa Y."/>
            <person name="Matsunawa H."/>
            <person name="Ichihara T."/>
            <person name="Shiohata N."/>
            <person name="Sano S."/>
            <person name="Moriya S."/>
            <person name="Momiyama H."/>
            <person name="Satoh N."/>
            <person name="Takami S."/>
            <person name="Terashima Y."/>
            <person name="Suzuki O."/>
            <person name="Nakagawa S."/>
            <person name="Senoh A."/>
            <person name="Mizoguchi H."/>
            <person name="Goto Y."/>
            <person name="Shimizu F."/>
            <person name="Wakebe H."/>
            <person name="Hishigaki H."/>
            <person name="Watanabe T."/>
            <person name="Sugiyama A."/>
            <person name="Takemoto M."/>
            <person name="Kawakami B."/>
            <person name="Yamazaki M."/>
            <person name="Watanabe K."/>
            <person name="Kumagai A."/>
            <person name="Itakura S."/>
            <person name="Fukuzumi Y."/>
            <person name="Fujimori Y."/>
            <person name="Komiyama M."/>
            <person name="Tashiro H."/>
            <person name="Tanigami A."/>
            <person name="Fujiwara T."/>
            <person name="Ono T."/>
            <person name="Yamada K."/>
            <person name="Fujii Y."/>
            <person name="Ozaki K."/>
            <person name="Hirao M."/>
            <person name="Ohmori Y."/>
            <person name="Kawabata A."/>
            <person name="Hikiji T."/>
            <person name="Kobatake N."/>
            <person name="Inagaki H."/>
            <person name="Ikema Y."/>
            <person name="Okamoto S."/>
            <person name="Okitani R."/>
            <person name="Kawakami T."/>
            <person name="Noguchi S."/>
            <person name="Itoh T."/>
            <person name="Shigeta K."/>
            <person name="Senba T."/>
            <person name="Matsumura K."/>
            <person name="Nakajima Y."/>
            <person name="Mizuno T."/>
            <person name="Morinaga M."/>
            <person name="Sasaki M."/>
            <person name="Togashi T."/>
            <person name="Oyama M."/>
            <person name="Hata H."/>
            <person name="Watanabe M."/>
            <person name="Komatsu T."/>
            <person name="Mizushima-Sugano J."/>
            <person name="Satoh T."/>
            <person name="Shirai Y."/>
            <person name="Takahashi Y."/>
            <person name="Nakagawa K."/>
            <person name="Okumura K."/>
            <person name="Nagase T."/>
            <person name="Nomura N."/>
            <person name="Kikuchi H."/>
            <person name="Masuho Y."/>
            <person name="Yamashita R."/>
            <person name="Nakai K."/>
            <person name="Yada T."/>
            <person name="Nakamura Y."/>
            <person name="Ohara O."/>
            <person name="Isogai T."/>
            <person name="Sugano S."/>
        </authorList>
    </citation>
    <scope>NUCLEOTIDE SEQUENCE [LARGE SCALE MRNA] (ISOFORM 3)</scope>
    <scope>VARIANT ARG-654</scope>
    <source>
        <tissue>Testis</tissue>
    </source>
</reference>
<reference key="4">
    <citation type="journal article" date="2004" name="Nature">
        <title>The DNA sequence and comparative analysis of human chromosome 5.</title>
        <authorList>
            <person name="Schmutz J."/>
            <person name="Martin J."/>
            <person name="Terry A."/>
            <person name="Couronne O."/>
            <person name="Grimwood J."/>
            <person name="Lowry S."/>
            <person name="Gordon L.A."/>
            <person name="Scott D."/>
            <person name="Xie G."/>
            <person name="Huang W."/>
            <person name="Hellsten U."/>
            <person name="Tran-Gyamfi M."/>
            <person name="She X."/>
            <person name="Prabhakar S."/>
            <person name="Aerts A."/>
            <person name="Altherr M."/>
            <person name="Bajorek E."/>
            <person name="Black S."/>
            <person name="Branscomb E."/>
            <person name="Caoile C."/>
            <person name="Challacombe J.F."/>
            <person name="Chan Y.M."/>
            <person name="Denys M."/>
            <person name="Detter J.C."/>
            <person name="Escobar J."/>
            <person name="Flowers D."/>
            <person name="Fotopulos D."/>
            <person name="Glavina T."/>
            <person name="Gomez M."/>
            <person name="Gonzales E."/>
            <person name="Goodstein D."/>
            <person name="Grigoriev I."/>
            <person name="Groza M."/>
            <person name="Hammon N."/>
            <person name="Hawkins T."/>
            <person name="Haydu L."/>
            <person name="Israni S."/>
            <person name="Jett J."/>
            <person name="Kadner K."/>
            <person name="Kimball H."/>
            <person name="Kobayashi A."/>
            <person name="Lopez F."/>
            <person name="Lou Y."/>
            <person name="Martinez D."/>
            <person name="Medina C."/>
            <person name="Morgan J."/>
            <person name="Nandkeshwar R."/>
            <person name="Noonan J.P."/>
            <person name="Pitluck S."/>
            <person name="Pollard M."/>
            <person name="Predki P."/>
            <person name="Priest J."/>
            <person name="Ramirez L."/>
            <person name="Retterer J."/>
            <person name="Rodriguez A."/>
            <person name="Rogers S."/>
            <person name="Salamov A."/>
            <person name="Salazar A."/>
            <person name="Thayer N."/>
            <person name="Tice H."/>
            <person name="Tsai M."/>
            <person name="Ustaszewska A."/>
            <person name="Vo N."/>
            <person name="Wheeler J."/>
            <person name="Wu K."/>
            <person name="Yang J."/>
            <person name="Dickson M."/>
            <person name="Cheng J.-F."/>
            <person name="Eichler E.E."/>
            <person name="Olsen A."/>
            <person name="Pennacchio L.A."/>
            <person name="Rokhsar D.S."/>
            <person name="Richardson P."/>
            <person name="Lucas S.M."/>
            <person name="Myers R.M."/>
            <person name="Rubin E.M."/>
        </authorList>
    </citation>
    <scope>NUCLEOTIDE SEQUENCE [LARGE SCALE GENOMIC DNA]</scope>
</reference>
<reference key="5">
    <citation type="submission" date="2005-09" db="EMBL/GenBank/DDBJ databases">
        <authorList>
            <person name="Mural R.J."/>
            <person name="Istrail S."/>
            <person name="Sutton G.G."/>
            <person name="Florea L."/>
            <person name="Halpern A.L."/>
            <person name="Mobarry C.M."/>
            <person name="Lippert R."/>
            <person name="Walenz B."/>
            <person name="Shatkay H."/>
            <person name="Dew I."/>
            <person name="Miller J.R."/>
            <person name="Flanigan M.J."/>
            <person name="Edwards N.J."/>
            <person name="Bolanos R."/>
            <person name="Fasulo D."/>
            <person name="Halldorsson B.V."/>
            <person name="Hannenhalli S."/>
            <person name="Turner R."/>
            <person name="Yooseph S."/>
            <person name="Lu F."/>
            <person name="Nusskern D.R."/>
            <person name="Shue B.C."/>
            <person name="Zheng X.H."/>
            <person name="Zhong F."/>
            <person name="Delcher A.L."/>
            <person name="Huson D.H."/>
            <person name="Kravitz S.A."/>
            <person name="Mouchard L."/>
            <person name="Reinert K."/>
            <person name="Remington K.A."/>
            <person name="Clark A.G."/>
            <person name="Waterman M.S."/>
            <person name="Eichler E.E."/>
            <person name="Adams M.D."/>
            <person name="Hunkapiller M.W."/>
            <person name="Myers E.W."/>
            <person name="Venter J.C."/>
        </authorList>
    </citation>
    <scope>NUCLEOTIDE SEQUENCE [LARGE SCALE GENOMIC DNA]</scope>
</reference>
<reference key="6">
    <citation type="journal article" date="2004" name="Genome Res.">
        <title>The status, quality, and expansion of the NIH full-length cDNA project: the Mammalian Gene Collection (MGC).</title>
        <authorList>
            <consortium name="The MGC Project Team"/>
        </authorList>
    </citation>
    <scope>NUCLEOTIDE SEQUENCE [LARGE SCALE MRNA] (ISOFORM 2)</scope>
    <source>
        <tissue>Brain</tissue>
    </source>
</reference>
<reference key="7">
    <citation type="journal article" date="2004" name="Cancer Immun.">
        <title>Identification of the gonad-specific anion transporter SLCO6A1 as a cancer/testis (CT) antigen expressed in human lung cancer.</title>
        <authorList>
            <person name="Lee S.-Y."/>
            <person name="Williamson B."/>
            <person name="Caballero O.L."/>
            <person name="Chen Y.-T."/>
            <person name="Scanlan M.J."/>
            <person name="Ritter G."/>
            <person name="Jongeneel C.V."/>
            <person name="Simpson A.J.G."/>
            <person name="Old L.J."/>
        </authorList>
    </citation>
    <scope>TISSUE SPECIFICITY</scope>
    <scope>IDENTIFICATION AS A CANCER/TESTIS ANTIGEN</scope>
</reference>
<protein>
    <recommendedName>
        <fullName>Solute carrier organic anion transporter family member 6A1</fullName>
    </recommendedName>
    <alternativeName>
        <fullName>Cancer/testis antigen 48</fullName>
        <shortName>CT48</shortName>
    </alternativeName>
    <alternativeName>
        <fullName>Gonad-specific transporter</fullName>
        <shortName>GST</shortName>
    </alternativeName>
    <alternativeName>
        <fullName>Organic anion-transporting polypeptide 6A1</fullName>
    </alternativeName>
    <alternativeName>
        <fullName>Organic anion-transporting polypeptide I</fullName>
        <shortName>OATP-I</shortName>
    </alternativeName>
    <alternativeName>
        <fullName>Solute carrier family 21 member 19</fullName>
    </alternativeName>
</protein>
<keyword id="KW-0025">Alternative splicing</keyword>
<keyword id="KW-1003">Cell membrane</keyword>
<keyword id="KW-1015">Disulfide bond</keyword>
<keyword id="KW-0325">Glycoprotein</keyword>
<keyword id="KW-0472">Membrane</keyword>
<keyword id="KW-1267">Proteomics identification</keyword>
<keyword id="KW-1185">Reference proteome</keyword>
<keyword id="KW-0812">Transmembrane</keyword>
<keyword id="KW-1133">Transmembrane helix</keyword>
<keyword id="KW-0813">Transport</keyword>
<dbReference type="EMBL" id="AY273897">
    <property type="protein sequence ID" value="AAP33048.1"/>
    <property type="molecule type" value="mRNA"/>
</dbReference>
<dbReference type="EMBL" id="AF505657">
    <property type="protein sequence ID" value="AAP30851.1"/>
    <property type="molecule type" value="mRNA"/>
</dbReference>
<dbReference type="EMBL" id="AK131445">
    <property type="protein sequence ID" value="BAD18590.1"/>
    <property type="molecule type" value="mRNA"/>
</dbReference>
<dbReference type="EMBL" id="AC094108">
    <property type="status" value="NOT_ANNOTATED_CDS"/>
    <property type="molecule type" value="Genomic_DNA"/>
</dbReference>
<dbReference type="EMBL" id="CH471086">
    <property type="protein sequence ID" value="EAW49095.1"/>
    <property type="molecule type" value="Genomic_DNA"/>
</dbReference>
<dbReference type="EMBL" id="BC034976">
    <property type="protein sequence ID" value="AAH34976.1"/>
    <property type="molecule type" value="mRNA"/>
</dbReference>
<dbReference type="CCDS" id="CCDS34206.1">
    <molecule id="Q86UG4-1"/>
</dbReference>
<dbReference type="CCDS" id="CCDS75282.1">
    <molecule id="Q86UG4-2"/>
</dbReference>
<dbReference type="CCDS" id="CCDS78042.1">
    <molecule id="Q86UG4-3"/>
</dbReference>
<dbReference type="RefSeq" id="NP_001275931.1">
    <molecule id="Q86UG4-1"/>
    <property type="nucleotide sequence ID" value="NM_001289002.2"/>
</dbReference>
<dbReference type="RefSeq" id="NP_001275933.1">
    <molecule id="Q86UG4-2"/>
    <property type="nucleotide sequence ID" value="NM_001289004.2"/>
</dbReference>
<dbReference type="RefSeq" id="NP_001294943.1">
    <property type="nucleotide sequence ID" value="NM_001308014.1"/>
</dbReference>
<dbReference type="RefSeq" id="NP_775759.3">
    <molecule id="Q86UG4-1"/>
    <property type="nucleotide sequence ID" value="NM_173488.4"/>
</dbReference>
<dbReference type="RefSeq" id="XP_005271931.1">
    <molecule id="Q86UG4-1"/>
    <property type="nucleotide sequence ID" value="XM_005271874.4"/>
</dbReference>
<dbReference type="RefSeq" id="XP_047272659.1">
    <molecule id="Q86UG4-2"/>
    <property type="nucleotide sequence ID" value="XM_047416703.1"/>
</dbReference>
<dbReference type="SMR" id="Q86UG4"/>
<dbReference type="BioGRID" id="126359">
    <property type="interactions" value="27"/>
</dbReference>
<dbReference type="FunCoup" id="Q86UG4">
    <property type="interactions" value="10"/>
</dbReference>
<dbReference type="IntAct" id="Q86UG4">
    <property type="interactions" value="17"/>
</dbReference>
<dbReference type="STRING" id="9606.ENSP00000421339"/>
<dbReference type="TCDB" id="2.A.60.1.17">
    <property type="family name" value="the organo anion transporter (oat) family"/>
</dbReference>
<dbReference type="GlyCosmos" id="Q86UG4">
    <property type="glycosylation" value="4 sites, No reported glycans"/>
</dbReference>
<dbReference type="GlyGen" id="Q86UG4">
    <property type="glycosylation" value="4 sites"/>
</dbReference>
<dbReference type="iPTMnet" id="Q86UG4"/>
<dbReference type="PhosphoSitePlus" id="Q86UG4"/>
<dbReference type="BioMuta" id="SLCO6A1"/>
<dbReference type="DMDM" id="160185610"/>
<dbReference type="jPOST" id="Q86UG4"/>
<dbReference type="MassIVE" id="Q86UG4"/>
<dbReference type="PaxDb" id="9606-ENSP00000421339"/>
<dbReference type="PeptideAtlas" id="Q86UG4"/>
<dbReference type="ProteomicsDB" id="69818">
    <molecule id="Q86UG4-1"/>
</dbReference>
<dbReference type="ProteomicsDB" id="69819">
    <molecule id="Q86UG4-2"/>
</dbReference>
<dbReference type="ProteomicsDB" id="69820">
    <molecule id="Q86UG4-3"/>
</dbReference>
<dbReference type="Antibodypedia" id="13335">
    <property type="antibodies" value="95 antibodies from 25 providers"/>
</dbReference>
<dbReference type="DNASU" id="133482"/>
<dbReference type="Ensembl" id="ENST00000379807.7">
    <molecule id="Q86UG4-1"/>
    <property type="protein sequence ID" value="ENSP00000369135.3"/>
    <property type="gene ID" value="ENSG00000205359.10"/>
</dbReference>
<dbReference type="Ensembl" id="ENST00000389019.7">
    <molecule id="Q86UG4-2"/>
    <property type="protein sequence ID" value="ENSP00000373671.3"/>
    <property type="gene ID" value="ENSG00000205359.10"/>
</dbReference>
<dbReference type="Ensembl" id="ENST00000506729.6">
    <molecule id="Q86UG4-1"/>
    <property type="protein sequence ID" value="ENSP00000421339.1"/>
    <property type="gene ID" value="ENSG00000205359.10"/>
</dbReference>
<dbReference type="GeneID" id="133482"/>
<dbReference type="KEGG" id="hsa:133482"/>
<dbReference type="MANE-Select" id="ENST00000506729.6">
    <property type="protein sequence ID" value="ENSP00000421339.1"/>
    <property type="RefSeq nucleotide sequence ID" value="NM_173488.5"/>
    <property type="RefSeq protein sequence ID" value="NP_775759.3"/>
</dbReference>
<dbReference type="UCSC" id="uc003knn.5">
    <molecule id="Q86UG4-1"/>
    <property type="organism name" value="human"/>
</dbReference>
<dbReference type="AGR" id="HGNC:23613"/>
<dbReference type="CTD" id="133482"/>
<dbReference type="DisGeNET" id="133482"/>
<dbReference type="GeneCards" id="SLCO6A1"/>
<dbReference type="HGNC" id="HGNC:23613">
    <property type="gene designation" value="SLCO6A1"/>
</dbReference>
<dbReference type="HPA" id="ENSG00000205359">
    <property type="expression patterns" value="Tissue enriched (testis)"/>
</dbReference>
<dbReference type="MIM" id="613365">
    <property type="type" value="gene"/>
</dbReference>
<dbReference type="neXtProt" id="NX_Q86UG4"/>
<dbReference type="OpenTargets" id="ENSG00000205359"/>
<dbReference type="PharmGKB" id="PA134949852"/>
<dbReference type="VEuPathDB" id="HostDB:ENSG00000205359"/>
<dbReference type="eggNOG" id="KOG3626">
    <property type="taxonomic scope" value="Eukaryota"/>
</dbReference>
<dbReference type="GeneTree" id="ENSGT01130000278287"/>
<dbReference type="HOGENOM" id="CLU_008954_2_1_1"/>
<dbReference type="InParanoid" id="Q86UG4"/>
<dbReference type="OMA" id="IFVHCNP"/>
<dbReference type="OrthoDB" id="5062115at2759"/>
<dbReference type="PAN-GO" id="Q86UG4">
    <property type="GO annotations" value="3 GO annotations based on evolutionary models"/>
</dbReference>
<dbReference type="PhylomeDB" id="Q86UG4"/>
<dbReference type="TreeFam" id="TF317540"/>
<dbReference type="PathwayCommons" id="Q86UG4"/>
<dbReference type="SignaLink" id="Q86UG4"/>
<dbReference type="BioGRID-ORCS" id="133482">
    <property type="hits" value="11 hits in 1140 CRISPR screens"/>
</dbReference>
<dbReference type="ChiTaRS" id="SLCO6A1">
    <property type="organism name" value="human"/>
</dbReference>
<dbReference type="GenomeRNAi" id="133482"/>
<dbReference type="Pharos" id="Q86UG4">
    <property type="development level" value="Tbio"/>
</dbReference>
<dbReference type="PRO" id="PR:Q86UG4"/>
<dbReference type="Proteomes" id="UP000005640">
    <property type="component" value="Chromosome 5"/>
</dbReference>
<dbReference type="RNAct" id="Q86UG4">
    <property type="molecule type" value="protein"/>
</dbReference>
<dbReference type="Bgee" id="ENSG00000205359">
    <property type="expression patterns" value="Expressed in sperm and 62 other cell types or tissues"/>
</dbReference>
<dbReference type="ExpressionAtlas" id="Q86UG4">
    <property type="expression patterns" value="baseline and differential"/>
</dbReference>
<dbReference type="GO" id="GO:0016323">
    <property type="term" value="C:basolateral plasma membrane"/>
    <property type="evidence" value="ECO:0000318"/>
    <property type="project" value="GO_Central"/>
</dbReference>
<dbReference type="GO" id="GO:0015347">
    <property type="term" value="F:sodium-independent organic anion transmembrane transporter activity"/>
    <property type="evidence" value="ECO:0000318"/>
    <property type="project" value="GO_Central"/>
</dbReference>
<dbReference type="GO" id="GO:0043252">
    <property type="term" value="P:sodium-independent organic anion transport"/>
    <property type="evidence" value="ECO:0000318"/>
    <property type="project" value="GO_Central"/>
</dbReference>
<dbReference type="CDD" id="cd17405">
    <property type="entry name" value="MFS_SLCO6_OATP6"/>
    <property type="match status" value="1"/>
</dbReference>
<dbReference type="FunFam" id="1.20.1250.20:FF:000363">
    <property type="entry name" value="Solute carrier organic anion transporter family member"/>
    <property type="match status" value="1"/>
</dbReference>
<dbReference type="FunFam" id="1.20.1250.20:FF:000384">
    <property type="entry name" value="Solute carrier organic anion transporter family member"/>
    <property type="match status" value="1"/>
</dbReference>
<dbReference type="Gene3D" id="1.20.1250.20">
    <property type="entry name" value="MFS general substrate transporter like domains"/>
    <property type="match status" value="2"/>
</dbReference>
<dbReference type="InterPro" id="IPR002350">
    <property type="entry name" value="Kazal_dom"/>
</dbReference>
<dbReference type="InterPro" id="IPR036058">
    <property type="entry name" value="Kazal_dom_sf"/>
</dbReference>
<dbReference type="InterPro" id="IPR036259">
    <property type="entry name" value="MFS_trans_sf"/>
</dbReference>
<dbReference type="InterPro" id="IPR004156">
    <property type="entry name" value="OATP"/>
</dbReference>
<dbReference type="NCBIfam" id="TIGR00805">
    <property type="entry name" value="oat"/>
    <property type="match status" value="1"/>
</dbReference>
<dbReference type="PANTHER" id="PTHR11388">
    <property type="entry name" value="ORGANIC ANION TRANSPORTER"/>
    <property type="match status" value="1"/>
</dbReference>
<dbReference type="PANTHER" id="PTHR11388:SF95">
    <property type="entry name" value="SOLUTE CARRIER ORGANIC ANION TRANSPORTER FAMILY MEMBER 6A1"/>
    <property type="match status" value="1"/>
</dbReference>
<dbReference type="Pfam" id="PF07648">
    <property type="entry name" value="Kazal_2"/>
    <property type="match status" value="1"/>
</dbReference>
<dbReference type="Pfam" id="PF03137">
    <property type="entry name" value="OATP"/>
    <property type="match status" value="1"/>
</dbReference>
<dbReference type="SUPFAM" id="SSF100895">
    <property type="entry name" value="Kazal-type serine protease inhibitors"/>
    <property type="match status" value="1"/>
</dbReference>
<dbReference type="SUPFAM" id="SSF103473">
    <property type="entry name" value="MFS general substrate transporter"/>
    <property type="match status" value="1"/>
</dbReference>
<dbReference type="PROSITE" id="PS51465">
    <property type="entry name" value="KAZAL_2"/>
    <property type="match status" value="1"/>
</dbReference>
<comment type="interaction">
    <interactant intactId="EBI-21657139">
        <id>Q86UG4-2</id>
    </interactant>
    <interactant intactId="EBI-720609">
        <id>O76024</id>
        <label>WFS1</label>
    </interactant>
    <organismsDiffer>false</organismsDiffer>
    <experiments>3</experiments>
</comment>
<comment type="subcellular location">
    <subcellularLocation>
        <location>Cell membrane</location>
        <topology>Multi-pass membrane protein</topology>
    </subcellularLocation>
</comment>
<comment type="alternative products">
    <event type="alternative splicing"/>
    <isoform>
        <id>Q86UG4-1</id>
        <name>1</name>
        <sequence type="displayed"/>
    </isoform>
    <isoform>
        <id>Q86UG4-2</id>
        <name>2</name>
        <sequence type="described" ref="VSP_028753"/>
    </isoform>
    <isoform>
        <id>Q86UG4-3</id>
        <name>3</name>
        <sequence type="described" ref="VSP_028753 VSP_028754"/>
    </isoform>
</comment>
<comment type="tissue specificity">
    <text evidence="4 6">Strongly expressed in testis. Weakly expressed in spleen, brain, fetal brain and placenta. Detected in lung tumors.</text>
</comment>
<comment type="similarity">
    <text evidence="9">Belongs to the organo anion transporter (TC 2.A.60) family.</text>
</comment>
<proteinExistence type="evidence at protein level"/>
<evidence type="ECO:0000255" key="1"/>
<evidence type="ECO:0000255" key="2">
    <source>
        <dbReference type="PROSITE-ProRule" id="PRU00798"/>
    </source>
</evidence>
<evidence type="ECO:0000256" key="3">
    <source>
        <dbReference type="SAM" id="MobiDB-lite"/>
    </source>
</evidence>
<evidence type="ECO:0000269" key="4">
    <source>
    </source>
</evidence>
<evidence type="ECO:0000269" key="5">
    <source>
    </source>
</evidence>
<evidence type="ECO:0000269" key="6">
    <source>
    </source>
</evidence>
<evidence type="ECO:0000303" key="7">
    <source>
    </source>
</evidence>
<evidence type="ECO:0000303" key="8">
    <source>
    </source>
</evidence>
<evidence type="ECO:0000305" key="9"/>
<feature type="chain" id="PRO_0000307642" description="Solute carrier organic anion transporter family member 6A1">
    <location>
        <begin position="1"/>
        <end position="719"/>
    </location>
</feature>
<feature type="topological domain" description="Cytoplasmic" evidence="1">
    <location>
        <begin position="1"/>
        <end position="106"/>
    </location>
</feature>
<feature type="transmembrane region" description="Helical; Name=1" evidence="1">
    <location>
        <begin position="107"/>
        <end position="126"/>
    </location>
</feature>
<feature type="topological domain" description="Extracellular" evidence="1">
    <location>
        <begin position="127"/>
        <end position="145"/>
    </location>
</feature>
<feature type="transmembrane region" description="Helical; Name=2" evidence="1">
    <location>
        <begin position="146"/>
        <end position="166"/>
    </location>
</feature>
<feature type="topological domain" description="Cytoplasmic" evidence="1">
    <location>
        <begin position="167"/>
        <end position="171"/>
    </location>
</feature>
<feature type="transmembrane region" description="Helical; Name=3" evidence="1">
    <location>
        <begin position="172"/>
        <end position="196"/>
    </location>
</feature>
<feature type="topological domain" description="Extracellular" evidence="1">
    <location>
        <begin position="197"/>
        <end position="223"/>
    </location>
</feature>
<feature type="transmembrane region" description="Helical; Name=4" evidence="1">
    <location>
        <begin position="224"/>
        <end position="254"/>
    </location>
</feature>
<feature type="topological domain" description="Cytoplasmic" evidence="1">
    <location>
        <begin position="255"/>
        <end position="274"/>
    </location>
</feature>
<feature type="transmembrane region" description="Helical; Name=5" evidence="1">
    <location>
        <begin position="275"/>
        <end position="295"/>
    </location>
</feature>
<feature type="topological domain" description="Extracellular" evidence="1">
    <location>
        <begin position="296"/>
        <end position="311"/>
    </location>
</feature>
<feature type="transmembrane region" description="Helical; Name=6" evidence="1">
    <location>
        <begin position="312"/>
        <end position="336"/>
    </location>
</feature>
<feature type="topological domain" description="Cytoplasmic" evidence="1">
    <location>
        <begin position="337"/>
        <end position="378"/>
    </location>
</feature>
<feature type="transmembrane region" description="Helical; Name=7" evidence="1">
    <location>
        <begin position="379"/>
        <end position="400"/>
    </location>
</feature>
<feature type="topological domain" description="Extracellular" evidence="1">
    <location>
        <begin position="401"/>
        <end position="420"/>
    </location>
</feature>
<feature type="transmembrane region" description="Helical; Name=8" evidence="1">
    <location>
        <begin position="421"/>
        <end position="444"/>
    </location>
</feature>
<feature type="topological domain" description="Cytoplasmic" evidence="1">
    <location>
        <begin position="445"/>
        <end position="448"/>
    </location>
</feature>
<feature type="transmembrane region" description="Helical; Name=9" evidence="1">
    <location>
        <begin position="449"/>
        <end position="472"/>
    </location>
</feature>
<feature type="topological domain" description="Extracellular" evidence="1">
    <location>
        <begin position="473"/>
        <end position="581"/>
    </location>
</feature>
<feature type="transmembrane region" description="Helical; Name=10" evidence="1">
    <location>
        <begin position="582"/>
        <end position="604"/>
    </location>
</feature>
<feature type="topological domain" description="Cytoplasmic" evidence="1">
    <location>
        <begin position="605"/>
        <end position="613"/>
    </location>
</feature>
<feature type="transmembrane region" description="Helical; Name=11" evidence="1">
    <location>
        <begin position="614"/>
        <end position="639"/>
    </location>
</feature>
<feature type="topological domain" description="Extracellular" evidence="1">
    <location>
        <begin position="640"/>
        <end position="673"/>
    </location>
</feature>
<feature type="transmembrane region" description="Helical; Name=12" evidence="1">
    <location>
        <begin position="674"/>
        <end position="691"/>
    </location>
</feature>
<feature type="topological domain" description="Cytoplasmic" evidence="1">
    <location>
        <begin position="692"/>
        <end position="719"/>
    </location>
</feature>
<feature type="domain" description="Kazal-like" evidence="2">
    <location>
        <begin position="496"/>
        <end position="551"/>
    </location>
</feature>
<feature type="region of interest" description="Disordered" evidence="3">
    <location>
        <begin position="1"/>
        <end position="46"/>
    </location>
</feature>
<feature type="compositionally biased region" description="Basic residues" evidence="3">
    <location>
        <begin position="33"/>
        <end position="46"/>
    </location>
</feature>
<feature type="glycosylation site" description="N-linked (GlcNAc...) asparagine" evidence="1">
    <location>
        <position position="300"/>
    </location>
</feature>
<feature type="glycosylation site" description="N-linked (GlcNAc...) asparagine" evidence="1">
    <location>
        <position position="497"/>
    </location>
</feature>
<feature type="glycosylation site" description="N-linked (GlcNAc...) asparagine" evidence="1">
    <location>
        <position position="546"/>
    </location>
</feature>
<feature type="glycosylation site" description="N-linked (GlcNAc...) asparagine" evidence="1">
    <location>
        <position position="661"/>
    </location>
</feature>
<feature type="disulfide bond" evidence="2">
    <location>
        <begin position="502"/>
        <end position="532"/>
    </location>
</feature>
<feature type="disulfide bond" evidence="2">
    <location>
        <begin position="508"/>
        <end position="528"/>
    </location>
</feature>
<feature type="disulfide bond" evidence="2">
    <location>
        <begin position="517"/>
        <end position="549"/>
    </location>
</feature>
<feature type="splice variant" id="VSP_028753" description="In isoform 2 and isoform 3." evidence="7 8">
    <location>
        <begin position="206"/>
        <end position="267"/>
    </location>
</feature>
<feature type="splice variant" id="VSP_028754" description="In isoform 3." evidence="7">
    <location>
        <begin position="301"/>
        <end position="491"/>
    </location>
</feature>
<feature type="sequence variant" id="VAR_036622" description="In dbSNP:rs13190449.">
    <original>A</original>
    <variation>V</variation>
    <location>
        <position position="27"/>
    </location>
</feature>
<feature type="sequence variant" id="VAR_036623" description="In dbSNP:rs17150488.">
    <original>K</original>
    <variation>R</variation>
    <location>
        <position position="381"/>
    </location>
</feature>
<feature type="sequence variant" id="VAR_053680" description="In dbSNP:rs10073333.">
    <original>P</original>
    <variation>A</variation>
    <location>
        <position position="527"/>
    </location>
</feature>
<feature type="sequence variant" id="VAR_036624" description="In dbSNP:rs10055840." evidence="5">
    <original>T</original>
    <variation>R</variation>
    <location>
        <position position="654"/>
    </location>
</feature>
<feature type="sequence conflict" description="In Ref. 3; BAD18590." evidence="9" ref="3">
    <original>E</original>
    <variation>D</variation>
    <location>
        <position position="23"/>
    </location>
</feature>
<feature type="sequence conflict" description="In Ref. 1; AAP33048." evidence="9" ref="1">
    <original>KPG</original>
    <variation>NRE</variation>
    <location>
        <begin position="77"/>
        <end position="79"/>
    </location>
</feature>
<feature type="sequence conflict" description="In Ref. 3; BAD18590." evidence="9" ref="3">
    <original>N</original>
    <variation>K</variation>
    <location>
        <position position="300"/>
    </location>
</feature>
<gene>
    <name type="primary">SLCO6A1</name>
    <name type="synonym">OATP6A1</name>
    <name type="synonym">SLC21A19</name>
</gene>
<organism>
    <name type="scientific">Homo sapiens</name>
    <name type="common">Human</name>
    <dbReference type="NCBI Taxonomy" id="9606"/>
    <lineage>
        <taxon>Eukaryota</taxon>
        <taxon>Metazoa</taxon>
        <taxon>Chordata</taxon>
        <taxon>Craniata</taxon>
        <taxon>Vertebrata</taxon>
        <taxon>Euteleostomi</taxon>
        <taxon>Mammalia</taxon>
        <taxon>Eutheria</taxon>
        <taxon>Euarchontoglires</taxon>
        <taxon>Primates</taxon>
        <taxon>Haplorrhini</taxon>
        <taxon>Catarrhini</taxon>
        <taxon>Hominidae</taxon>
        <taxon>Homo</taxon>
    </lineage>
</organism>
<sequence>MFVGVARHSGSQDEVSRGVEPLEAARAQPAKDRRAKGTPKSSKPGKKHRYLRLLPEALIRFGGFRKRKKAKSSVSKKPGEVDDSLEQPCGLGCLVSTCCECCNNIRCFMIFYCILLICQGVVFGLIDVSIGDFQKEYQLKTIEKLALEKSYDISSGLVAIFIAFYGDRKKVIWFVASSFLIGLGSLLCAFPSINEENKQSKVGIEDICEEIKVVSGCQSSGISFQSKYLSFFILGQTVQGIAGMPLYILGITFIDENVATHSAGIYLGIAECTSMIGYALGYVLGAPLVKVPENTTSATNTTVNNGSPEWLWTWWINFLFAAVVAWCTLIPLSCFPNNMPGSTRIKARKRKQLHFFDSRLKDLKLGTNIKDLCAALWILMKNPVLICLALSKATEYLVIIGASEFLPIYLENQFILTPTVATTLAGLVLIPGGALGQLLGGVIVSTLEMSCKALMRFIMVTSVISLILLVFIIFVRCNPVQFAGINEDYDGTGKLGNLTAPCNEKCRCSSSIYSSICGRDDIEYFSPCFAGCTYSKAQNQKKMYYNCSCIKEGLITADAEGDFIDARPGKCDAKCYKLPLFIAFIFSTLIFSGFSGVPIVLAMTRVVPDKLRSLALGVSYVILRIFGTIPGPSIFKMSGETSCILRDVNKCGHTGRCWIYNKTKMAFLLVGICFLCKLCTIIFTTIAFFIYKRRLNENTDFPDVTVKNPKVKKKEETDL</sequence>
<name>SO6A1_HUMAN</name>
<accession>Q86UG4</accession>
<accession>A6NHC1</accession>
<accession>Q6ZMY5</accession>
<accession>Q86UV2</accession>
<accession>Q8IYU5</accession>